<gene>
    <name evidence="1" type="primary">rpoC</name>
    <name type="ordered locus">Sden_0164</name>
</gene>
<organism>
    <name type="scientific">Shewanella denitrificans (strain OS217 / ATCC BAA-1090 / DSM 15013)</name>
    <dbReference type="NCBI Taxonomy" id="318161"/>
    <lineage>
        <taxon>Bacteria</taxon>
        <taxon>Pseudomonadati</taxon>
        <taxon>Pseudomonadota</taxon>
        <taxon>Gammaproteobacteria</taxon>
        <taxon>Alteromonadales</taxon>
        <taxon>Shewanellaceae</taxon>
        <taxon>Shewanella</taxon>
    </lineage>
</organism>
<sequence>MKDLLKFLKQQSKTEEFNGIKIGLASPDLIRSWSFGEVKKPETINYRTFKPEREGLFCARIFGPVKDYECLCGKYKRLKHRGVICEKCGVEVTQTKVRRERMGHIDLASPVAHIWFLKSLPSRIGLMLDMTLRDIERVLYFESFVVIEPGMTTLERGQMLTEETYLDALEEYGDEFEAKMGAEAVLELLRAINLEEQIEQMREELPSINSETRRKKVTKRLKLMEAFFTSGNKPEWMILKVLPVLPPDLRPLVPLDGGRFATSDLNDLYRRVINRNNRLKRLLDLAAPDIIVRNEKRMLQESVDALLDNGRRGRAITGSNKRPLKSLADMIKGKQGRFRQNLLGKRVDYSGRSVITVGPTLRLHQCGLPKKMALELFKPFIYGKLEGRGLATTIKAAKKMVEREQAEVWDVLDEVIREHPVMLNRAPTLHRLGIQAFEPVLIEGKAIQLHPLVCAAYNADFDGDQMAVHVPLTLEAQLEARALMMSTNNILSPANGEPVITPSQDVVLGLYYTSRERINGRGEGMVFADVSEVEKAYATGVAEIHARVKVRITETSIDADGEKTKATRIVDTTIGRALLSLILPEGLSYDLVNQNMGKKQISKLLNTCYRQLGLKDTVIFADQLMYTGFRFATISGASVGIDDMVIPDEKYTLVADAEAEVLEIQEQFQSGLVTAGERYNKVIDIWASANEKVSKAMMENLSVETVINRDGVEEKQASFNSIYMMADSGARGSAAQIRQLAGMRGLMAKPDGSIIETPITANFREGLNVLQYFISTHGARKGLADTALKTANSGYLTRRLVDVAQDLVVIEDDCGAEHGLTMKPLIEGGDVVEPLRERVLGRVVAIDVIKPGSEEILAPRNTLLDEAWCDILEEHSVDEVIVRSVITCETDFGVCAACYGRDLARGHIINHGEAIGVVAAQSIGEPGTQLTMRTFHIGGAASRASAENNVQVKNAGSLKLHNAKHVSNIDGKLVIVSRSSELAIIDELGREKERYKVPYGTVLEKLEDSEVTAGEIIANWDPHTHPIISEVAGSVKFVDMIDGVTMTRQTDELTGLSSVVVLDVGARTSAGKELRPAIRLVGADGNDLMIPGTDVPAQYFLPGNAIVAKDDNAKINVGDALARIPQESSKTRDITGGLPRVADLFEARKPKEPAILAEISGTISFGKETKGKRRLVITPADGSEHYEEMIPKWRNLNVFEGEKVERGEVIADGPEAAHDILRLRGIHNVANYIVNEVQDVYRLQGVKINDKHIEVIIRQMLRKCLITSAGDTEFLEGEQAEVARVKIANRELIAQGKTPATFERELLGITKASLATESFISAASFQETTRVLTEAAVGGKSDQLRGLKENVIVGRLIPAGTGYAYHKKRNALRATEDAKKAAAKIAPAVTTASEAEQNLADLLNLAGGEE</sequence>
<proteinExistence type="inferred from homology"/>
<dbReference type="EC" id="2.7.7.6" evidence="1"/>
<dbReference type="EMBL" id="CP000302">
    <property type="protein sequence ID" value="ABE53461.1"/>
    <property type="molecule type" value="Genomic_DNA"/>
</dbReference>
<dbReference type="RefSeq" id="WP_011494630.1">
    <property type="nucleotide sequence ID" value="NC_007954.1"/>
</dbReference>
<dbReference type="SMR" id="Q12SW5"/>
<dbReference type="STRING" id="318161.Sden_0164"/>
<dbReference type="KEGG" id="sdn:Sden_0164"/>
<dbReference type="eggNOG" id="COG0086">
    <property type="taxonomic scope" value="Bacteria"/>
</dbReference>
<dbReference type="HOGENOM" id="CLU_000524_3_1_6"/>
<dbReference type="OrthoDB" id="9815296at2"/>
<dbReference type="Proteomes" id="UP000001982">
    <property type="component" value="Chromosome"/>
</dbReference>
<dbReference type="GO" id="GO:0000428">
    <property type="term" value="C:DNA-directed RNA polymerase complex"/>
    <property type="evidence" value="ECO:0007669"/>
    <property type="project" value="UniProtKB-KW"/>
</dbReference>
<dbReference type="GO" id="GO:0003677">
    <property type="term" value="F:DNA binding"/>
    <property type="evidence" value="ECO:0007669"/>
    <property type="project" value="UniProtKB-UniRule"/>
</dbReference>
<dbReference type="GO" id="GO:0003899">
    <property type="term" value="F:DNA-directed RNA polymerase activity"/>
    <property type="evidence" value="ECO:0007669"/>
    <property type="project" value="UniProtKB-UniRule"/>
</dbReference>
<dbReference type="GO" id="GO:0000287">
    <property type="term" value="F:magnesium ion binding"/>
    <property type="evidence" value="ECO:0007669"/>
    <property type="project" value="UniProtKB-UniRule"/>
</dbReference>
<dbReference type="GO" id="GO:0008270">
    <property type="term" value="F:zinc ion binding"/>
    <property type="evidence" value="ECO:0007669"/>
    <property type="project" value="UniProtKB-UniRule"/>
</dbReference>
<dbReference type="GO" id="GO:0006351">
    <property type="term" value="P:DNA-templated transcription"/>
    <property type="evidence" value="ECO:0007669"/>
    <property type="project" value="UniProtKB-UniRule"/>
</dbReference>
<dbReference type="CDD" id="cd02655">
    <property type="entry name" value="RNAP_beta'_C"/>
    <property type="match status" value="1"/>
</dbReference>
<dbReference type="CDD" id="cd01609">
    <property type="entry name" value="RNAP_beta'_N"/>
    <property type="match status" value="1"/>
</dbReference>
<dbReference type="FunFam" id="1.10.132.30:FF:000003">
    <property type="entry name" value="DNA-directed RNA polymerase subunit beta"/>
    <property type="match status" value="1"/>
</dbReference>
<dbReference type="FunFam" id="1.10.150.390:FF:000002">
    <property type="entry name" value="DNA-directed RNA polymerase subunit beta"/>
    <property type="match status" value="1"/>
</dbReference>
<dbReference type="FunFam" id="1.10.40.90:FF:000001">
    <property type="entry name" value="DNA-directed RNA polymerase subunit beta"/>
    <property type="match status" value="1"/>
</dbReference>
<dbReference type="FunFam" id="4.10.860.120:FF:000001">
    <property type="entry name" value="DNA-directed RNA polymerase subunit beta"/>
    <property type="match status" value="1"/>
</dbReference>
<dbReference type="Gene3D" id="1.10.132.30">
    <property type="match status" value="1"/>
</dbReference>
<dbReference type="Gene3D" id="1.10.150.390">
    <property type="match status" value="1"/>
</dbReference>
<dbReference type="Gene3D" id="1.10.1790.20">
    <property type="match status" value="1"/>
</dbReference>
<dbReference type="Gene3D" id="1.10.40.90">
    <property type="match status" value="1"/>
</dbReference>
<dbReference type="Gene3D" id="2.40.40.20">
    <property type="match status" value="1"/>
</dbReference>
<dbReference type="Gene3D" id="2.40.50.100">
    <property type="match status" value="3"/>
</dbReference>
<dbReference type="Gene3D" id="4.10.860.120">
    <property type="entry name" value="RNA polymerase II, clamp domain"/>
    <property type="match status" value="1"/>
</dbReference>
<dbReference type="Gene3D" id="1.10.274.100">
    <property type="entry name" value="RNA polymerase Rpb1, domain 3"/>
    <property type="match status" value="2"/>
</dbReference>
<dbReference type="HAMAP" id="MF_01322">
    <property type="entry name" value="RNApol_bact_RpoC"/>
    <property type="match status" value="1"/>
</dbReference>
<dbReference type="InterPro" id="IPR045867">
    <property type="entry name" value="DNA-dir_RpoC_beta_prime"/>
</dbReference>
<dbReference type="InterPro" id="IPR012754">
    <property type="entry name" value="DNA-dir_RpoC_beta_prime_bact"/>
</dbReference>
<dbReference type="InterPro" id="IPR000722">
    <property type="entry name" value="RNA_pol_asu"/>
</dbReference>
<dbReference type="InterPro" id="IPR006592">
    <property type="entry name" value="RNA_pol_N"/>
</dbReference>
<dbReference type="InterPro" id="IPR007080">
    <property type="entry name" value="RNA_pol_Rpb1_1"/>
</dbReference>
<dbReference type="InterPro" id="IPR007066">
    <property type="entry name" value="RNA_pol_Rpb1_3"/>
</dbReference>
<dbReference type="InterPro" id="IPR042102">
    <property type="entry name" value="RNA_pol_Rpb1_3_sf"/>
</dbReference>
<dbReference type="InterPro" id="IPR007083">
    <property type="entry name" value="RNA_pol_Rpb1_4"/>
</dbReference>
<dbReference type="InterPro" id="IPR007081">
    <property type="entry name" value="RNA_pol_Rpb1_5"/>
</dbReference>
<dbReference type="InterPro" id="IPR044893">
    <property type="entry name" value="RNA_pol_Rpb1_clamp_domain"/>
</dbReference>
<dbReference type="InterPro" id="IPR038120">
    <property type="entry name" value="Rpb1_funnel_sf"/>
</dbReference>
<dbReference type="NCBIfam" id="TIGR02386">
    <property type="entry name" value="rpoC_TIGR"/>
    <property type="match status" value="1"/>
</dbReference>
<dbReference type="PANTHER" id="PTHR19376">
    <property type="entry name" value="DNA-DIRECTED RNA POLYMERASE"/>
    <property type="match status" value="1"/>
</dbReference>
<dbReference type="PANTHER" id="PTHR19376:SF54">
    <property type="entry name" value="DNA-DIRECTED RNA POLYMERASE SUBUNIT BETA"/>
    <property type="match status" value="1"/>
</dbReference>
<dbReference type="Pfam" id="PF04997">
    <property type="entry name" value="RNA_pol_Rpb1_1"/>
    <property type="match status" value="1"/>
</dbReference>
<dbReference type="Pfam" id="PF00623">
    <property type="entry name" value="RNA_pol_Rpb1_2"/>
    <property type="match status" value="1"/>
</dbReference>
<dbReference type="Pfam" id="PF04983">
    <property type="entry name" value="RNA_pol_Rpb1_3"/>
    <property type="match status" value="1"/>
</dbReference>
<dbReference type="Pfam" id="PF05000">
    <property type="entry name" value="RNA_pol_Rpb1_4"/>
    <property type="match status" value="1"/>
</dbReference>
<dbReference type="Pfam" id="PF04998">
    <property type="entry name" value="RNA_pol_Rpb1_5"/>
    <property type="match status" value="1"/>
</dbReference>
<dbReference type="SMART" id="SM00663">
    <property type="entry name" value="RPOLA_N"/>
    <property type="match status" value="1"/>
</dbReference>
<dbReference type="SUPFAM" id="SSF64484">
    <property type="entry name" value="beta and beta-prime subunits of DNA dependent RNA-polymerase"/>
    <property type="match status" value="1"/>
</dbReference>
<evidence type="ECO:0000255" key="1">
    <source>
        <dbReference type="HAMAP-Rule" id="MF_01322"/>
    </source>
</evidence>
<comment type="function">
    <text evidence="1">DNA-dependent RNA polymerase catalyzes the transcription of DNA into RNA using the four ribonucleoside triphosphates as substrates.</text>
</comment>
<comment type="catalytic activity">
    <reaction evidence="1">
        <text>RNA(n) + a ribonucleoside 5'-triphosphate = RNA(n+1) + diphosphate</text>
        <dbReference type="Rhea" id="RHEA:21248"/>
        <dbReference type="Rhea" id="RHEA-COMP:14527"/>
        <dbReference type="Rhea" id="RHEA-COMP:17342"/>
        <dbReference type="ChEBI" id="CHEBI:33019"/>
        <dbReference type="ChEBI" id="CHEBI:61557"/>
        <dbReference type="ChEBI" id="CHEBI:140395"/>
        <dbReference type="EC" id="2.7.7.6"/>
    </reaction>
</comment>
<comment type="cofactor">
    <cofactor evidence="1">
        <name>Mg(2+)</name>
        <dbReference type="ChEBI" id="CHEBI:18420"/>
    </cofactor>
    <text evidence="1">Binds 1 Mg(2+) ion per subunit.</text>
</comment>
<comment type="cofactor">
    <cofactor evidence="1">
        <name>Zn(2+)</name>
        <dbReference type="ChEBI" id="CHEBI:29105"/>
    </cofactor>
    <text evidence="1">Binds 2 Zn(2+) ions per subunit.</text>
</comment>
<comment type="subunit">
    <text evidence="1">The RNAP catalytic core consists of 2 alpha, 1 beta, 1 beta' and 1 omega subunit. When a sigma factor is associated with the core the holoenzyme is formed, which can initiate transcription.</text>
</comment>
<comment type="similarity">
    <text evidence="1">Belongs to the RNA polymerase beta' chain family.</text>
</comment>
<feature type="chain" id="PRO_1000086415" description="DNA-directed RNA polymerase subunit beta'">
    <location>
        <begin position="1"/>
        <end position="1410"/>
    </location>
</feature>
<feature type="binding site" evidence="1">
    <location>
        <position position="70"/>
    </location>
    <ligand>
        <name>Zn(2+)</name>
        <dbReference type="ChEBI" id="CHEBI:29105"/>
        <label>1</label>
    </ligand>
</feature>
<feature type="binding site" evidence="1">
    <location>
        <position position="72"/>
    </location>
    <ligand>
        <name>Zn(2+)</name>
        <dbReference type="ChEBI" id="CHEBI:29105"/>
        <label>1</label>
    </ligand>
</feature>
<feature type="binding site" evidence="1">
    <location>
        <position position="85"/>
    </location>
    <ligand>
        <name>Zn(2+)</name>
        <dbReference type="ChEBI" id="CHEBI:29105"/>
        <label>1</label>
    </ligand>
</feature>
<feature type="binding site" evidence="1">
    <location>
        <position position="88"/>
    </location>
    <ligand>
        <name>Zn(2+)</name>
        <dbReference type="ChEBI" id="CHEBI:29105"/>
        <label>1</label>
    </ligand>
</feature>
<feature type="binding site" evidence="1">
    <location>
        <position position="460"/>
    </location>
    <ligand>
        <name>Mg(2+)</name>
        <dbReference type="ChEBI" id="CHEBI:18420"/>
    </ligand>
</feature>
<feature type="binding site" evidence="1">
    <location>
        <position position="462"/>
    </location>
    <ligand>
        <name>Mg(2+)</name>
        <dbReference type="ChEBI" id="CHEBI:18420"/>
    </ligand>
</feature>
<feature type="binding site" evidence="1">
    <location>
        <position position="464"/>
    </location>
    <ligand>
        <name>Mg(2+)</name>
        <dbReference type="ChEBI" id="CHEBI:18420"/>
    </ligand>
</feature>
<feature type="binding site" evidence="1">
    <location>
        <position position="814"/>
    </location>
    <ligand>
        <name>Zn(2+)</name>
        <dbReference type="ChEBI" id="CHEBI:29105"/>
        <label>2</label>
    </ligand>
</feature>
<feature type="binding site" evidence="1">
    <location>
        <position position="888"/>
    </location>
    <ligand>
        <name>Zn(2+)</name>
        <dbReference type="ChEBI" id="CHEBI:29105"/>
        <label>2</label>
    </ligand>
</feature>
<feature type="binding site" evidence="1">
    <location>
        <position position="895"/>
    </location>
    <ligand>
        <name>Zn(2+)</name>
        <dbReference type="ChEBI" id="CHEBI:29105"/>
        <label>2</label>
    </ligand>
</feature>
<feature type="binding site" evidence="1">
    <location>
        <position position="898"/>
    </location>
    <ligand>
        <name>Zn(2+)</name>
        <dbReference type="ChEBI" id="CHEBI:29105"/>
        <label>2</label>
    </ligand>
</feature>
<keyword id="KW-0240">DNA-directed RNA polymerase</keyword>
<keyword id="KW-0460">Magnesium</keyword>
<keyword id="KW-0479">Metal-binding</keyword>
<keyword id="KW-0548">Nucleotidyltransferase</keyword>
<keyword id="KW-1185">Reference proteome</keyword>
<keyword id="KW-0804">Transcription</keyword>
<keyword id="KW-0808">Transferase</keyword>
<keyword id="KW-0862">Zinc</keyword>
<protein>
    <recommendedName>
        <fullName evidence="1">DNA-directed RNA polymerase subunit beta'</fullName>
        <shortName evidence="1">RNAP subunit beta'</shortName>
        <ecNumber evidence="1">2.7.7.6</ecNumber>
    </recommendedName>
    <alternativeName>
        <fullName evidence="1">RNA polymerase subunit beta'</fullName>
    </alternativeName>
    <alternativeName>
        <fullName evidence="1">Transcriptase subunit beta'</fullName>
    </alternativeName>
</protein>
<reference key="1">
    <citation type="submission" date="2006-03" db="EMBL/GenBank/DDBJ databases">
        <title>Complete sequence of Shewanella denitrificans OS217.</title>
        <authorList>
            <consortium name="US DOE Joint Genome Institute"/>
            <person name="Copeland A."/>
            <person name="Lucas S."/>
            <person name="Lapidus A."/>
            <person name="Barry K."/>
            <person name="Detter J.C."/>
            <person name="Glavina del Rio T."/>
            <person name="Hammon N."/>
            <person name="Israni S."/>
            <person name="Dalin E."/>
            <person name="Tice H."/>
            <person name="Pitluck S."/>
            <person name="Brettin T."/>
            <person name="Bruce D."/>
            <person name="Han C."/>
            <person name="Tapia R."/>
            <person name="Gilna P."/>
            <person name="Kiss H."/>
            <person name="Schmutz J."/>
            <person name="Larimer F."/>
            <person name="Land M."/>
            <person name="Hauser L."/>
            <person name="Kyrpides N."/>
            <person name="Lykidis A."/>
            <person name="Richardson P."/>
        </authorList>
    </citation>
    <scope>NUCLEOTIDE SEQUENCE [LARGE SCALE GENOMIC DNA]</scope>
    <source>
        <strain>OS217 / ATCC BAA-1090 / DSM 15013</strain>
    </source>
</reference>
<name>RPOC_SHEDO</name>
<accession>Q12SW5</accession>